<reference key="1">
    <citation type="journal article" date="2008" name="Genome Res.">
        <title>Genome sequence of the beta-rhizobium Cupriavidus taiwanensis and comparative genomics of rhizobia.</title>
        <authorList>
            <person name="Amadou C."/>
            <person name="Pascal G."/>
            <person name="Mangenot S."/>
            <person name="Glew M."/>
            <person name="Bontemps C."/>
            <person name="Capela D."/>
            <person name="Carrere S."/>
            <person name="Cruveiller S."/>
            <person name="Dossat C."/>
            <person name="Lajus A."/>
            <person name="Marchetti M."/>
            <person name="Poinsot V."/>
            <person name="Rouy Z."/>
            <person name="Servin B."/>
            <person name="Saad M."/>
            <person name="Schenowitz C."/>
            <person name="Barbe V."/>
            <person name="Batut J."/>
            <person name="Medigue C."/>
            <person name="Masson-Boivin C."/>
        </authorList>
    </citation>
    <scope>NUCLEOTIDE SEQUENCE [LARGE SCALE GENOMIC DNA]</scope>
    <source>
        <strain>DSM 17343 / BCRC 17206 / CCUG 44338 / CIP 107171 / LMG 19424 / R1</strain>
    </source>
</reference>
<evidence type="ECO:0000255" key="1">
    <source>
        <dbReference type="HAMAP-Rule" id="MF_00048"/>
    </source>
</evidence>
<evidence type="ECO:0000256" key="2">
    <source>
        <dbReference type="SAM" id="MobiDB-lite"/>
    </source>
</evidence>
<proteinExistence type="inferred from homology"/>
<gene>
    <name type="ordered locus">RALTA_A3032</name>
</gene>
<sequence>MMRSFKSTQEPSRQARGAQAEDRALAHLRRQGLEPVVRNYRCKGGEIDLVMRAPDGTLVFVEVRQRSGRGFGGAAASITPAKQRRVVLAARHYLATLARVPPCRFDVVALEPDRLEWLQHAFDADAAGAGS</sequence>
<comment type="similarity">
    <text evidence="1">Belongs to the UPF0102 family.</text>
</comment>
<organism>
    <name type="scientific">Cupriavidus taiwanensis (strain DSM 17343 / BCRC 17206 / CCUG 44338 / CIP 107171 / LMG 19424 / R1)</name>
    <name type="common">Ralstonia taiwanensis (strain LMG 19424)</name>
    <dbReference type="NCBI Taxonomy" id="977880"/>
    <lineage>
        <taxon>Bacteria</taxon>
        <taxon>Pseudomonadati</taxon>
        <taxon>Pseudomonadota</taxon>
        <taxon>Betaproteobacteria</taxon>
        <taxon>Burkholderiales</taxon>
        <taxon>Burkholderiaceae</taxon>
        <taxon>Cupriavidus</taxon>
    </lineage>
</organism>
<name>Y3032_CUPTR</name>
<protein>
    <recommendedName>
        <fullName evidence="1">UPF0102 protein RALTA_A3032</fullName>
    </recommendedName>
</protein>
<feature type="chain" id="PRO_1000200134" description="UPF0102 protein RALTA_A3032">
    <location>
        <begin position="1"/>
        <end position="131"/>
    </location>
</feature>
<feature type="region of interest" description="Disordered" evidence="2">
    <location>
        <begin position="1"/>
        <end position="21"/>
    </location>
</feature>
<feature type="compositionally biased region" description="Polar residues" evidence="2">
    <location>
        <begin position="1"/>
        <end position="12"/>
    </location>
</feature>
<accession>B3R808</accession>
<dbReference type="EMBL" id="CU633749">
    <property type="protein sequence ID" value="CAQ70953.1"/>
    <property type="molecule type" value="Genomic_DNA"/>
</dbReference>
<dbReference type="SMR" id="B3R808"/>
<dbReference type="KEGG" id="cti:RALTA_A3032"/>
<dbReference type="eggNOG" id="COG0792">
    <property type="taxonomic scope" value="Bacteria"/>
</dbReference>
<dbReference type="HOGENOM" id="CLU_115353_1_0_4"/>
<dbReference type="Proteomes" id="UP000001692">
    <property type="component" value="Chromosome 1"/>
</dbReference>
<dbReference type="GO" id="GO:0003676">
    <property type="term" value="F:nucleic acid binding"/>
    <property type="evidence" value="ECO:0007669"/>
    <property type="project" value="InterPro"/>
</dbReference>
<dbReference type="CDD" id="cd20736">
    <property type="entry name" value="PoNe_Nuclease"/>
    <property type="match status" value="1"/>
</dbReference>
<dbReference type="Gene3D" id="3.40.1350.10">
    <property type="match status" value="1"/>
</dbReference>
<dbReference type="HAMAP" id="MF_00048">
    <property type="entry name" value="UPF0102"/>
    <property type="match status" value="1"/>
</dbReference>
<dbReference type="InterPro" id="IPR011335">
    <property type="entry name" value="Restrct_endonuc-II-like"/>
</dbReference>
<dbReference type="InterPro" id="IPR011856">
    <property type="entry name" value="tRNA_endonuc-like_dom_sf"/>
</dbReference>
<dbReference type="InterPro" id="IPR003509">
    <property type="entry name" value="UPF0102_YraN-like"/>
</dbReference>
<dbReference type="NCBIfam" id="NF009150">
    <property type="entry name" value="PRK12497.1-3"/>
    <property type="match status" value="1"/>
</dbReference>
<dbReference type="NCBIfam" id="TIGR00252">
    <property type="entry name" value="YraN family protein"/>
    <property type="match status" value="1"/>
</dbReference>
<dbReference type="PANTHER" id="PTHR34039">
    <property type="entry name" value="UPF0102 PROTEIN YRAN"/>
    <property type="match status" value="1"/>
</dbReference>
<dbReference type="PANTHER" id="PTHR34039:SF1">
    <property type="entry name" value="UPF0102 PROTEIN YRAN"/>
    <property type="match status" value="1"/>
</dbReference>
<dbReference type="Pfam" id="PF02021">
    <property type="entry name" value="UPF0102"/>
    <property type="match status" value="1"/>
</dbReference>
<dbReference type="SUPFAM" id="SSF52980">
    <property type="entry name" value="Restriction endonuclease-like"/>
    <property type="match status" value="1"/>
</dbReference>